<reference key="1">
    <citation type="journal article" date="2005" name="Nature">
        <title>The genome of the social amoeba Dictyostelium discoideum.</title>
        <authorList>
            <person name="Eichinger L."/>
            <person name="Pachebat J.A."/>
            <person name="Gloeckner G."/>
            <person name="Rajandream M.A."/>
            <person name="Sucgang R."/>
            <person name="Berriman M."/>
            <person name="Song J."/>
            <person name="Olsen R."/>
            <person name="Szafranski K."/>
            <person name="Xu Q."/>
            <person name="Tunggal B."/>
            <person name="Kummerfeld S."/>
            <person name="Madera M."/>
            <person name="Konfortov B.A."/>
            <person name="Rivero F."/>
            <person name="Bankier A.T."/>
            <person name="Lehmann R."/>
            <person name="Hamlin N."/>
            <person name="Davies R."/>
            <person name="Gaudet P."/>
            <person name="Fey P."/>
            <person name="Pilcher K."/>
            <person name="Chen G."/>
            <person name="Saunders D."/>
            <person name="Sodergren E.J."/>
            <person name="Davis P."/>
            <person name="Kerhornou A."/>
            <person name="Nie X."/>
            <person name="Hall N."/>
            <person name="Anjard C."/>
            <person name="Hemphill L."/>
            <person name="Bason N."/>
            <person name="Farbrother P."/>
            <person name="Desany B."/>
            <person name="Just E."/>
            <person name="Morio T."/>
            <person name="Rost R."/>
            <person name="Churcher C.M."/>
            <person name="Cooper J."/>
            <person name="Haydock S."/>
            <person name="van Driessche N."/>
            <person name="Cronin A."/>
            <person name="Goodhead I."/>
            <person name="Muzny D.M."/>
            <person name="Mourier T."/>
            <person name="Pain A."/>
            <person name="Lu M."/>
            <person name="Harper D."/>
            <person name="Lindsay R."/>
            <person name="Hauser H."/>
            <person name="James K.D."/>
            <person name="Quiles M."/>
            <person name="Madan Babu M."/>
            <person name="Saito T."/>
            <person name="Buchrieser C."/>
            <person name="Wardroper A."/>
            <person name="Felder M."/>
            <person name="Thangavelu M."/>
            <person name="Johnson D."/>
            <person name="Knights A."/>
            <person name="Loulseged H."/>
            <person name="Mungall K.L."/>
            <person name="Oliver K."/>
            <person name="Price C."/>
            <person name="Quail M.A."/>
            <person name="Urushihara H."/>
            <person name="Hernandez J."/>
            <person name="Rabbinowitsch E."/>
            <person name="Steffen D."/>
            <person name="Sanders M."/>
            <person name="Ma J."/>
            <person name="Kohara Y."/>
            <person name="Sharp S."/>
            <person name="Simmonds M.N."/>
            <person name="Spiegler S."/>
            <person name="Tivey A."/>
            <person name="Sugano S."/>
            <person name="White B."/>
            <person name="Walker D."/>
            <person name="Woodward J.R."/>
            <person name="Winckler T."/>
            <person name="Tanaka Y."/>
            <person name="Shaulsky G."/>
            <person name="Schleicher M."/>
            <person name="Weinstock G.M."/>
            <person name="Rosenthal A."/>
            <person name="Cox E.C."/>
            <person name="Chisholm R.L."/>
            <person name="Gibbs R.A."/>
            <person name="Loomis W.F."/>
            <person name="Platzer M."/>
            <person name="Kay R.R."/>
            <person name="Williams J.G."/>
            <person name="Dear P.H."/>
            <person name="Noegel A.A."/>
            <person name="Barrell B.G."/>
            <person name="Kuspa A."/>
        </authorList>
    </citation>
    <scope>NUCLEOTIDE SEQUENCE [LARGE SCALE GENOMIC DNA]</scope>
    <source>
        <strain>AX4</strain>
    </source>
</reference>
<sequence>MFVNFKKIQSYIAYDLYDNNKIREFVDSLKQEELDNYIIYQFEVDDATLLQLEKEELELTQLVQEQYIDKKDFSFLNNHHLWIKYQDQDFIVNEIKNPENNNNNNNNNFYLNCFTIKGTENEIKKELNLNDNDNEINTYATFSITRYHFKMPQKIDLYIDCVINYDNNQNGNNNNNNNNNNNNNKNKFSLYGHVKCQAKDYSELLLFYILYNQPKPLKPNIINYLLSLKNNDNNNNDKTNPINKLQSPISNETILQTPKVFDEDPLFKFIQKGENSQNSSSNSSFCSIN</sequence>
<proteinExistence type="predicted"/>
<protein>
    <recommendedName>
        <fullName>Uncharacterized protein DDB_G0267862</fullName>
    </recommendedName>
</protein>
<gene>
    <name type="ORF">DDB_G0267862</name>
</gene>
<dbReference type="EMBL" id="AAFI02000003">
    <property type="protein sequence ID" value="EAL73384.1"/>
    <property type="molecule type" value="Genomic_DNA"/>
</dbReference>
<dbReference type="RefSeq" id="XP_647361.1">
    <property type="nucleotide sequence ID" value="XM_642269.1"/>
</dbReference>
<dbReference type="FunCoup" id="Q55G22">
    <property type="interactions" value="108"/>
</dbReference>
<dbReference type="PaxDb" id="44689-DDB0305058"/>
<dbReference type="EnsemblProtists" id="EAL73384">
    <property type="protein sequence ID" value="EAL73384"/>
    <property type="gene ID" value="DDB_G0267862"/>
</dbReference>
<dbReference type="GeneID" id="8616172"/>
<dbReference type="KEGG" id="ddi:DDB_G0267862"/>
<dbReference type="dictyBase" id="DDB_G0267862"/>
<dbReference type="VEuPathDB" id="AmoebaDB:DDB_G0267862"/>
<dbReference type="HOGENOM" id="CLU_964512_0_0_1"/>
<dbReference type="InParanoid" id="Q55G22"/>
<dbReference type="PRO" id="PR:Q55G22"/>
<dbReference type="Proteomes" id="UP000002195">
    <property type="component" value="Chromosome 1"/>
</dbReference>
<keyword id="KW-1185">Reference proteome</keyword>
<organism>
    <name type="scientific">Dictyostelium discoideum</name>
    <name type="common">Social amoeba</name>
    <dbReference type="NCBI Taxonomy" id="44689"/>
    <lineage>
        <taxon>Eukaryota</taxon>
        <taxon>Amoebozoa</taxon>
        <taxon>Evosea</taxon>
        <taxon>Eumycetozoa</taxon>
        <taxon>Dictyostelia</taxon>
        <taxon>Dictyosteliales</taxon>
        <taxon>Dictyosteliaceae</taxon>
        <taxon>Dictyostelium</taxon>
    </lineage>
</organism>
<name>Y9597_DICDI</name>
<feature type="chain" id="PRO_0000348203" description="Uncharacterized protein DDB_G0267862">
    <location>
        <begin position="1"/>
        <end position="289"/>
    </location>
</feature>
<accession>Q55G22</accession>